<proteinExistence type="evidence at protein level"/>
<evidence type="ECO:0000250" key="1">
    <source>
        <dbReference type="UniProtKB" id="Q8GHB2"/>
    </source>
</evidence>
<evidence type="ECO:0000269" key="2">
    <source>
    </source>
</evidence>
<evidence type="ECO:0000269" key="3">
    <source ref="3"/>
</evidence>
<evidence type="ECO:0000303" key="4">
    <source>
    </source>
</evidence>
<evidence type="ECO:0000303" key="5">
    <source>
    </source>
</evidence>
<evidence type="ECO:0000303" key="6">
    <source ref="3"/>
</evidence>
<evidence type="ECO:0000305" key="7"/>
<comment type="function">
    <text evidence="2 3">Magnesium-independent aromatic prenyltransferase that catalyzes the irreversible transfer of a dimethylallyl group to 4-hydroxyphenylpyruvate to produce the ring A structure in the novobiocin biosynthesis pathway. Novobiocin is an aminocoumarin family antibiotic that targets bacterial DNA gyrases. It is able to prenylate many different compounds, including the phenylpropanoids 4-coumarate and caffeate, the plant polyketide resveratrol, the (iso)flavonoid naringenin, apigenin, daidzein and genistein, and the dihydroxynaphthalenes 1,6-DHN and 2,7-DHN.</text>
</comment>
<comment type="catalytic activity">
    <reaction evidence="2 3">
        <text>3-(4-hydroxyphenyl)pyruvate + dimethylallyl diphosphate = 3-dimethylallyl-4-hydroxyphenylpyruvate + diphosphate</text>
        <dbReference type="Rhea" id="RHEA:37055"/>
        <dbReference type="ChEBI" id="CHEBI:33019"/>
        <dbReference type="ChEBI" id="CHEBI:36242"/>
        <dbReference type="ChEBI" id="CHEBI:57623"/>
        <dbReference type="ChEBI" id="CHEBI:74408"/>
        <dbReference type="EC" id="2.5.1.111"/>
    </reaction>
</comment>
<comment type="biophysicochemical properties">
    <kinetics>
        <KM evidence="2">33 uM for 4-hydroxyphenylpyruvate</KM>
        <KM evidence="2">15.1 uM for dimethylallyl diphosphate</KM>
    </kinetics>
    <phDependence>
        <text evidence="3">Optimum pH is 7.</text>
    </phDependence>
    <temperatureDependence>
        <text evidence="3">Optimum temperature is between 30 and 40 degrees Celsius.</text>
    </temperatureDependence>
</comment>
<comment type="pathway">
    <text>Antibiotic biosynthesis; novobiocin biosynthesis.</text>
</comment>
<comment type="subunit">
    <text evidence="2">Monomer.</text>
</comment>
<comment type="subcellular location">
    <subcellularLocation>
        <location evidence="3">Cytoplasm</location>
    </subcellularLocation>
</comment>
<comment type="similarity">
    <text evidence="7">Belongs to the aromatic prenyltransferase family.</text>
</comment>
<feature type="chain" id="PRO_0000423991" description="4-hydroxyphenylpyruvate 3-dimethylallyltransferase">
    <location>
        <begin position="1"/>
        <end position="323"/>
    </location>
</feature>
<feature type="binding site" evidence="1">
    <location>
        <position position="160"/>
    </location>
    <ligand>
        <name>substrate</name>
    </ligand>
</feature>
<feature type="binding site" evidence="1">
    <location>
        <position position="281"/>
    </location>
    <ligand>
        <name>substrate</name>
    </ligand>
</feature>
<keyword id="KW-0045">Antibiotic biosynthesis</keyword>
<keyword id="KW-0963">Cytoplasm</keyword>
<keyword id="KW-0637">Prenyltransferase</keyword>
<keyword id="KW-0808">Transferase</keyword>
<dbReference type="EC" id="2.5.1.111" evidence="2 3"/>
<dbReference type="EMBL" id="AF170880">
    <property type="protein sequence ID" value="AAF67510.2"/>
    <property type="molecule type" value="Genomic_DNA"/>
</dbReference>
<dbReference type="EMBL" id="AB496950">
    <property type="protein sequence ID" value="BAI44329.1"/>
    <property type="molecule type" value="Genomic_DNA"/>
</dbReference>
<dbReference type="RefSeq" id="WP_079127921.1">
    <property type="nucleotide sequence ID" value="NZ_JBFBIX010000004.1"/>
</dbReference>
<dbReference type="SMR" id="Q9L9F1"/>
<dbReference type="KEGG" id="ag:AAF67510"/>
<dbReference type="BioCyc" id="MetaCyc:MONOMER-18091"/>
<dbReference type="BRENDA" id="2.5.1.111">
    <property type="organism ID" value="6099"/>
</dbReference>
<dbReference type="UniPathway" id="UPA01035"/>
<dbReference type="GO" id="GO:0005737">
    <property type="term" value="C:cytoplasm"/>
    <property type="evidence" value="ECO:0007669"/>
    <property type="project" value="UniProtKB-SubCell"/>
</dbReference>
<dbReference type="GO" id="GO:0004659">
    <property type="term" value="F:prenyltransferase activity"/>
    <property type="evidence" value="ECO:0000314"/>
    <property type="project" value="UniProtKB"/>
</dbReference>
<dbReference type="GO" id="GO:0016765">
    <property type="term" value="F:transferase activity, transferring alkyl or aryl (other than methyl) groups"/>
    <property type="evidence" value="ECO:0000314"/>
    <property type="project" value="UniProtKB"/>
</dbReference>
<dbReference type="GO" id="GO:0043642">
    <property type="term" value="P:novobiocin biosynthetic process"/>
    <property type="evidence" value="ECO:0000314"/>
    <property type="project" value="UniProtKB"/>
</dbReference>
<dbReference type="CDD" id="cd13931">
    <property type="entry name" value="PT-CloQ_NphB"/>
    <property type="match status" value="1"/>
</dbReference>
<dbReference type="InterPro" id="IPR033964">
    <property type="entry name" value="Aro_prenylTrfase"/>
</dbReference>
<dbReference type="InterPro" id="IPR020965">
    <property type="entry name" value="Prenyltransferase_CloQ"/>
</dbReference>
<dbReference type="InterPro" id="IPR036239">
    <property type="entry name" value="PrenylTrfase-like_sf"/>
</dbReference>
<dbReference type="Pfam" id="PF11468">
    <property type="entry name" value="PTase_Orf2"/>
    <property type="match status" value="1"/>
</dbReference>
<dbReference type="SFLD" id="SFLDS00036">
    <property type="entry name" value="Aromatic_Prenyltransferase"/>
    <property type="match status" value="1"/>
</dbReference>
<dbReference type="SFLD" id="SFLDG01163">
    <property type="entry name" value="II"/>
    <property type="match status" value="1"/>
</dbReference>
<dbReference type="SUPFAM" id="SSF143492">
    <property type="entry name" value="Prenyltransferase-like"/>
    <property type="match status" value="1"/>
</dbReference>
<gene>
    <name evidence="4" type="primary">novQ</name>
</gene>
<protein>
    <recommendedName>
        <fullName evidence="6">4-hydroxyphenylpyruvate 3-dimethylallyltransferase</fullName>
        <ecNumber evidence="2 3">2.5.1.111</ecNumber>
    </recommendedName>
    <alternativeName>
        <fullName evidence="6">4HPP 3-dimethylallyltransferase</fullName>
    </alternativeName>
    <alternativeName>
        <fullName evidence="5">Aromatic prenyltransferase NovQ</fullName>
    </alternativeName>
    <alternativeName>
        <fullName evidence="6">Dimethylallyl diphosphate:4-hydroxyphenylpyruvate dimethylallyl transferase</fullName>
    </alternativeName>
    <alternativeName>
        <fullName evidence="4">Novobiocin biosynthesis protein Q</fullName>
    </alternativeName>
</protein>
<name>NOVQ_STRNV</name>
<organism>
    <name type="scientific">Streptomyces niveus</name>
    <name type="common">Streptomyces spheroides</name>
    <dbReference type="NCBI Taxonomy" id="193462"/>
    <lineage>
        <taxon>Bacteria</taxon>
        <taxon>Bacillati</taxon>
        <taxon>Actinomycetota</taxon>
        <taxon>Actinomycetes</taxon>
        <taxon>Kitasatosporales</taxon>
        <taxon>Streptomycetaceae</taxon>
        <taxon>Streptomyces</taxon>
    </lineage>
</organism>
<reference key="1">
    <citation type="journal article" date="2000" name="Antimicrob. Agents Chemother.">
        <title>Identification of the novobiocin biosynthetic gene cluster of Streptomyces spheroides NCIB 11891.</title>
        <authorList>
            <person name="Steffensky M."/>
            <person name="Muhlenweg A."/>
            <person name="Wang Z.X."/>
            <person name="Li S.M."/>
            <person name="Heide L."/>
        </authorList>
    </citation>
    <scope>NUCLEOTIDE SEQUENCE [GENOMIC DNA]</scope>
    <source>
        <strain>ATCC 23965 / DSM 40292 / JCM 4252 / NBRC 12917 / NCIMB 11891 / NRRL 2449</strain>
    </source>
</reference>
<reference key="2">
    <citation type="journal article" date="2009" name="J. Antibiot.">
        <title>NovQ is a prenyltransferase capable of catalyzing the addition of a dimethylallyl group to both phenylpropanoids and flavonoids.</title>
        <authorList>
            <person name="Ozaki T."/>
            <person name="Mishima S."/>
            <person name="Nishiyama M."/>
            <person name="Kuzuyama T."/>
        </authorList>
    </citation>
    <scope>NUCLEOTIDE SEQUENCE [GENOMIC DNA]</scope>
    <scope>FUNCTION</scope>
    <scope>CATALYTIC ACTIVITY</scope>
    <scope>BIOPHYSICOCHEMICAL PROPERTIES</scope>
    <scope>SUBUNIT</scope>
    <scope>SUBSTRATE SPECIFICITY</scope>
    <source>
        <strain>16259</strain>
    </source>
</reference>
<reference key="3">
    <citation type="journal article" date="1998" name="FEMS Microbiol. Ecol.">
        <title>Novobiocin biosynthesis in Streptomyces spheroides: identification of a dimethylallyl diphosphate:4-hydroxyphenylpyruvate dimethylallyl transferase.</title>
        <authorList>
            <person name="Steffensky M."/>
            <person name="Li S.-M."/>
            <person name="Vogler B."/>
            <person name="Heide L."/>
        </authorList>
    </citation>
    <scope>FUNCTION</scope>
    <scope>CATALYTIC ACTIVITY</scope>
    <scope>BIOPHYSICOCHEMICAL PROPERTIES</scope>
    <scope>SUBCELLULAR LOCATION</scope>
    <scope>SUBSTRATE SPECIFICITY</scope>
    <source>
        <strain>ATCC 23965 / DSM 40292 / JCM 4252 / NBRC 12917 / NCIMB 11891 / NRRL 2449</strain>
    </source>
</reference>
<sequence>MPALPMNQEFDRERFRVDLRATAAAIGAPVTPRVTDTVLETFRDNFAQGATLWKTTSQPGDQLSYRFFSRLKMDTVGRAVDAGLLDGTHPTVPIVEDWSDLYGGTPVQSADFDAGRGMAKTWLYFGGLRPAEDILSVPALPAPVQARLKDFLGLGLAHVRFAAVDWRHRSANVYFRGQGPLDTAQFARVHALSGGTPPAADVVAEVLAYVPEDYCVAITLDLHTGAIDRVCFYALKVPKDARPRVPARIATFLEVAPSHDPEECNVIGWSFGRSGDYVKAERSYTGNMTEILSGWNCFFHGEEGRDHDLRALQDTGSITGGAR</sequence>
<accession>Q9L9F1</accession>
<accession>C9K4Z5</accession>